<reference key="1">
    <citation type="journal article" date="2000" name="Science">
        <title>The genome sequence of Drosophila melanogaster.</title>
        <authorList>
            <person name="Adams M.D."/>
            <person name="Celniker S.E."/>
            <person name="Holt R.A."/>
            <person name="Evans C.A."/>
            <person name="Gocayne J.D."/>
            <person name="Amanatides P.G."/>
            <person name="Scherer S.E."/>
            <person name="Li P.W."/>
            <person name="Hoskins R.A."/>
            <person name="Galle R.F."/>
            <person name="George R.A."/>
            <person name="Lewis S.E."/>
            <person name="Richards S."/>
            <person name="Ashburner M."/>
            <person name="Henderson S.N."/>
            <person name="Sutton G.G."/>
            <person name="Wortman J.R."/>
            <person name="Yandell M.D."/>
            <person name="Zhang Q."/>
            <person name="Chen L.X."/>
            <person name="Brandon R.C."/>
            <person name="Rogers Y.-H.C."/>
            <person name="Blazej R.G."/>
            <person name="Champe M."/>
            <person name="Pfeiffer B.D."/>
            <person name="Wan K.H."/>
            <person name="Doyle C."/>
            <person name="Baxter E.G."/>
            <person name="Helt G."/>
            <person name="Nelson C.R."/>
            <person name="Miklos G.L.G."/>
            <person name="Abril J.F."/>
            <person name="Agbayani A."/>
            <person name="An H.-J."/>
            <person name="Andrews-Pfannkoch C."/>
            <person name="Baldwin D."/>
            <person name="Ballew R.M."/>
            <person name="Basu A."/>
            <person name="Baxendale J."/>
            <person name="Bayraktaroglu L."/>
            <person name="Beasley E.M."/>
            <person name="Beeson K.Y."/>
            <person name="Benos P.V."/>
            <person name="Berman B.P."/>
            <person name="Bhandari D."/>
            <person name="Bolshakov S."/>
            <person name="Borkova D."/>
            <person name="Botchan M.R."/>
            <person name="Bouck J."/>
            <person name="Brokstein P."/>
            <person name="Brottier P."/>
            <person name="Burtis K.C."/>
            <person name="Busam D.A."/>
            <person name="Butler H."/>
            <person name="Cadieu E."/>
            <person name="Center A."/>
            <person name="Chandra I."/>
            <person name="Cherry J.M."/>
            <person name="Cawley S."/>
            <person name="Dahlke C."/>
            <person name="Davenport L.B."/>
            <person name="Davies P."/>
            <person name="de Pablos B."/>
            <person name="Delcher A."/>
            <person name="Deng Z."/>
            <person name="Mays A.D."/>
            <person name="Dew I."/>
            <person name="Dietz S.M."/>
            <person name="Dodson K."/>
            <person name="Doup L.E."/>
            <person name="Downes M."/>
            <person name="Dugan-Rocha S."/>
            <person name="Dunkov B.C."/>
            <person name="Dunn P."/>
            <person name="Durbin K.J."/>
            <person name="Evangelista C.C."/>
            <person name="Ferraz C."/>
            <person name="Ferriera S."/>
            <person name="Fleischmann W."/>
            <person name="Fosler C."/>
            <person name="Gabrielian A.E."/>
            <person name="Garg N.S."/>
            <person name="Gelbart W.M."/>
            <person name="Glasser K."/>
            <person name="Glodek A."/>
            <person name="Gong F."/>
            <person name="Gorrell J.H."/>
            <person name="Gu Z."/>
            <person name="Guan P."/>
            <person name="Harris M."/>
            <person name="Harris N.L."/>
            <person name="Harvey D.A."/>
            <person name="Heiman T.J."/>
            <person name="Hernandez J.R."/>
            <person name="Houck J."/>
            <person name="Hostin D."/>
            <person name="Houston K.A."/>
            <person name="Howland T.J."/>
            <person name="Wei M.-H."/>
            <person name="Ibegwam C."/>
            <person name="Jalali M."/>
            <person name="Kalush F."/>
            <person name="Karpen G.H."/>
            <person name="Ke Z."/>
            <person name="Kennison J.A."/>
            <person name="Ketchum K.A."/>
            <person name="Kimmel B.E."/>
            <person name="Kodira C.D."/>
            <person name="Kraft C.L."/>
            <person name="Kravitz S."/>
            <person name="Kulp D."/>
            <person name="Lai Z."/>
            <person name="Lasko P."/>
            <person name="Lei Y."/>
            <person name="Levitsky A.A."/>
            <person name="Li J.H."/>
            <person name="Li Z."/>
            <person name="Liang Y."/>
            <person name="Lin X."/>
            <person name="Liu X."/>
            <person name="Mattei B."/>
            <person name="McIntosh T.C."/>
            <person name="McLeod M.P."/>
            <person name="McPherson D."/>
            <person name="Merkulov G."/>
            <person name="Milshina N.V."/>
            <person name="Mobarry C."/>
            <person name="Morris J."/>
            <person name="Moshrefi A."/>
            <person name="Mount S.M."/>
            <person name="Moy M."/>
            <person name="Murphy B."/>
            <person name="Murphy L."/>
            <person name="Muzny D.M."/>
            <person name="Nelson D.L."/>
            <person name="Nelson D.R."/>
            <person name="Nelson K.A."/>
            <person name="Nixon K."/>
            <person name="Nusskern D.R."/>
            <person name="Pacleb J.M."/>
            <person name="Palazzolo M."/>
            <person name="Pittman G.S."/>
            <person name="Pan S."/>
            <person name="Pollard J."/>
            <person name="Puri V."/>
            <person name="Reese M.G."/>
            <person name="Reinert K."/>
            <person name="Remington K."/>
            <person name="Saunders R.D.C."/>
            <person name="Scheeler F."/>
            <person name="Shen H."/>
            <person name="Shue B.C."/>
            <person name="Siden-Kiamos I."/>
            <person name="Simpson M."/>
            <person name="Skupski M.P."/>
            <person name="Smith T.J."/>
            <person name="Spier E."/>
            <person name="Spradling A.C."/>
            <person name="Stapleton M."/>
            <person name="Strong R."/>
            <person name="Sun E."/>
            <person name="Svirskas R."/>
            <person name="Tector C."/>
            <person name="Turner R."/>
            <person name="Venter E."/>
            <person name="Wang A.H."/>
            <person name="Wang X."/>
            <person name="Wang Z.-Y."/>
            <person name="Wassarman D.A."/>
            <person name="Weinstock G.M."/>
            <person name="Weissenbach J."/>
            <person name="Williams S.M."/>
            <person name="Woodage T."/>
            <person name="Worley K.C."/>
            <person name="Wu D."/>
            <person name="Yang S."/>
            <person name="Yao Q.A."/>
            <person name="Ye J."/>
            <person name="Yeh R.-F."/>
            <person name="Zaveri J.S."/>
            <person name="Zhan M."/>
            <person name="Zhang G."/>
            <person name="Zhao Q."/>
            <person name="Zheng L."/>
            <person name="Zheng X.H."/>
            <person name="Zhong F.N."/>
            <person name="Zhong W."/>
            <person name="Zhou X."/>
            <person name="Zhu S.C."/>
            <person name="Zhu X."/>
            <person name="Smith H.O."/>
            <person name="Gibbs R.A."/>
            <person name="Myers E.W."/>
            <person name="Rubin G.M."/>
            <person name="Venter J.C."/>
        </authorList>
    </citation>
    <scope>NUCLEOTIDE SEQUENCE [LARGE SCALE GENOMIC DNA]</scope>
    <source>
        <strain>Berkeley</strain>
    </source>
</reference>
<reference key="2">
    <citation type="journal article" date="2002" name="Genome Biol.">
        <title>Annotation of the Drosophila melanogaster euchromatic genome: a systematic review.</title>
        <authorList>
            <person name="Misra S."/>
            <person name="Crosby M.A."/>
            <person name="Mungall C.J."/>
            <person name="Matthews B.B."/>
            <person name="Campbell K.S."/>
            <person name="Hradecky P."/>
            <person name="Huang Y."/>
            <person name="Kaminker J.S."/>
            <person name="Millburn G.H."/>
            <person name="Prochnik S.E."/>
            <person name="Smith C.D."/>
            <person name="Tupy J.L."/>
            <person name="Whitfield E.J."/>
            <person name="Bayraktaroglu L."/>
            <person name="Berman B.P."/>
            <person name="Bettencourt B.R."/>
            <person name="Celniker S.E."/>
            <person name="de Grey A.D.N.J."/>
            <person name="Drysdale R.A."/>
            <person name="Harris N.L."/>
            <person name="Richter J."/>
            <person name="Russo S."/>
            <person name="Schroeder A.J."/>
            <person name="Shu S.Q."/>
            <person name="Stapleton M."/>
            <person name="Yamada C."/>
            <person name="Ashburner M."/>
            <person name="Gelbart W.M."/>
            <person name="Rubin G.M."/>
            <person name="Lewis S.E."/>
        </authorList>
    </citation>
    <scope>GENOME REANNOTATION</scope>
    <source>
        <strain>Berkeley</strain>
    </source>
</reference>
<reference key="3">
    <citation type="submission" date="2005-06" db="EMBL/GenBank/DDBJ databases">
        <authorList>
            <person name="Stapleton M."/>
            <person name="Carlson J.W."/>
            <person name="Chavez C."/>
            <person name="Frise E."/>
            <person name="George R.A."/>
            <person name="Pacleb J.M."/>
            <person name="Park S."/>
            <person name="Wan K.H."/>
            <person name="Yu C."/>
            <person name="Celniker S.E."/>
        </authorList>
    </citation>
    <scope>NUCLEOTIDE SEQUENCE [LARGE SCALE MRNA]</scope>
    <source>
        <strain>Berkeley</strain>
        <tissue>Testis</tissue>
    </source>
</reference>
<reference key="4">
    <citation type="journal article" date="2007" name="Genetics">
        <title>Involvement of the mitochondrial protein translocator component tim50 in growth, cell proliferation and the modulation of respiration in Drosophila.</title>
        <authorList>
            <person name="Sugiyama S."/>
            <person name="Moritoh S."/>
            <person name="Furukawa Y."/>
            <person name="Mizuno T."/>
            <person name="Lim Y.M."/>
            <person name="Tsuda L."/>
            <person name="Nishida Y."/>
        </authorList>
    </citation>
    <scope>IDENTIFICATION</scope>
    <scope>TISSUE SPECIFICITY</scope>
</reference>
<dbReference type="EMBL" id="AE014134">
    <property type="protein sequence ID" value="AAF57243.1"/>
    <property type="molecule type" value="Genomic_DNA"/>
</dbReference>
<dbReference type="EMBL" id="BT023720">
    <property type="protein sequence ID" value="AAY85120.1"/>
    <property type="molecule type" value="mRNA"/>
</dbReference>
<dbReference type="RefSeq" id="NP_610130.1">
    <property type="nucleotide sequence ID" value="NM_136286.3"/>
</dbReference>
<dbReference type="SMR" id="Q9V9P3"/>
<dbReference type="BioGRID" id="61379">
    <property type="interactions" value="1"/>
</dbReference>
<dbReference type="FunCoup" id="Q9V9P3">
    <property type="interactions" value="1251"/>
</dbReference>
<dbReference type="STRING" id="7227.FBpp0085289"/>
<dbReference type="PaxDb" id="7227-FBpp0085289"/>
<dbReference type="DNASU" id="35437"/>
<dbReference type="EnsemblMetazoa" id="FBtr0085935">
    <property type="protein sequence ID" value="FBpp0085289"/>
    <property type="gene ID" value="FBgn0032971"/>
</dbReference>
<dbReference type="GeneID" id="35437"/>
<dbReference type="KEGG" id="dme:Dmel_CG6691"/>
<dbReference type="AGR" id="FB:FBgn0032971"/>
<dbReference type="CTD" id="35437"/>
<dbReference type="FlyBase" id="FBgn0032971">
    <property type="gene designation" value="ttm3"/>
</dbReference>
<dbReference type="VEuPathDB" id="VectorBase:FBgn0032971"/>
<dbReference type="eggNOG" id="KOG2832">
    <property type="taxonomic scope" value="Eukaryota"/>
</dbReference>
<dbReference type="GeneTree" id="ENSGT01040000240503"/>
<dbReference type="HOGENOM" id="CLU_048293_0_2_1"/>
<dbReference type="InParanoid" id="Q9V9P3"/>
<dbReference type="OMA" id="PYGYISY"/>
<dbReference type="OrthoDB" id="287041at2759"/>
<dbReference type="PhylomeDB" id="Q9V9P3"/>
<dbReference type="BioGRID-ORCS" id="35437">
    <property type="hits" value="0 hits in 1 CRISPR screen"/>
</dbReference>
<dbReference type="GenomeRNAi" id="35437"/>
<dbReference type="PRO" id="PR:Q9V9P3"/>
<dbReference type="Proteomes" id="UP000000803">
    <property type="component" value="Chromosome 2L"/>
</dbReference>
<dbReference type="Bgee" id="FBgn0032971">
    <property type="expression patterns" value="Expressed in early-mid elongation-stage spermatid (Drosophila) in testis and 21 other cell types or tissues"/>
</dbReference>
<dbReference type="ExpressionAtlas" id="Q9V9P3">
    <property type="expression patterns" value="differential"/>
</dbReference>
<dbReference type="GO" id="GO:0005743">
    <property type="term" value="C:mitochondrial inner membrane"/>
    <property type="evidence" value="ECO:0000250"/>
    <property type="project" value="UniProtKB"/>
</dbReference>
<dbReference type="GO" id="GO:0005739">
    <property type="term" value="C:mitochondrion"/>
    <property type="evidence" value="ECO:0000250"/>
    <property type="project" value="FlyBase"/>
</dbReference>
<dbReference type="GO" id="GO:0005744">
    <property type="term" value="C:TIM23 mitochondrial import inner membrane translocase complex"/>
    <property type="evidence" value="ECO:0000250"/>
    <property type="project" value="UniProtKB"/>
</dbReference>
<dbReference type="GO" id="GO:0004722">
    <property type="term" value="F:protein serine/threonine phosphatase activity"/>
    <property type="evidence" value="ECO:0000250"/>
    <property type="project" value="UniProtKB"/>
</dbReference>
<dbReference type="GO" id="GO:0004725">
    <property type="term" value="F:protein tyrosine phosphatase activity"/>
    <property type="evidence" value="ECO:0000250"/>
    <property type="project" value="UniProtKB"/>
</dbReference>
<dbReference type="GO" id="GO:0007006">
    <property type="term" value="P:mitochondrial membrane organization"/>
    <property type="evidence" value="ECO:0000250"/>
    <property type="project" value="UniProtKB"/>
</dbReference>
<dbReference type="GO" id="GO:0007005">
    <property type="term" value="P:mitochondrion organization"/>
    <property type="evidence" value="ECO:0000250"/>
    <property type="project" value="FlyBase"/>
</dbReference>
<dbReference type="GO" id="GO:0006470">
    <property type="term" value="P:protein dephosphorylation"/>
    <property type="evidence" value="ECO:0000250"/>
    <property type="project" value="UniProtKB"/>
</dbReference>
<dbReference type="GO" id="GO:0030150">
    <property type="term" value="P:protein import into mitochondrial matrix"/>
    <property type="evidence" value="ECO:0000318"/>
    <property type="project" value="GO_Central"/>
</dbReference>
<dbReference type="CDD" id="cd07521">
    <property type="entry name" value="HAD_FCP1-like"/>
    <property type="match status" value="1"/>
</dbReference>
<dbReference type="FunFam" id="3.40.50.1000:FF:000019">
    <property type="entry name" value="Mitochondrial import inner membrane translocase subunit TIM50"/>
    <property type="match status" value="1"/>
</dbReference>
<dbReference type="Gene3D" id="3.40.50.1000">
    <property type="entry name" value="HAD superfamily/HAD-like"/>
    <property type="match status" value="1"/>
</dbReference>
<dbReference type="InterPro" id="IPR004274">
    <property type="entry name" value="FCP1_dom"/>
</dbReference>
<dbReference type="InterPro" id="IPR036412">
    <property type="entry name" value="HAD-like_sf"/>
</dbReference>
<dbReference type="InterPro" id="IPR023214">
    <property type="entry name" value="HAD_sf"/>
</dbReference>
<dbReference type="InterPro" id="IPR050365">
    <property type="entry name" value="TIM50"/>
</dbReference>
<dbReference type="PANTHER" id="PTHR12210">
    <property type="entry name" value="DULLARD PROTEIN PHOSPHATASE"/>
    <property type="match status" value="1"/>
</dbReference>
<dbReference type="Pfam" id="PF03031">
    <property type="entry name" value="NIF"/>
    <property type="match status" value="1"/>
</dbReference>
<dbReference type="SMART" id="SM00577">
    <property type="entry name" value="CPDc"/>
    <property type="match status" value="1"/>
</dbReference>
<dbReference type="SUPFAM" id="SSF56784">
    <property type="entry name" value="HAD-like"/>
    <property type="match status" value="1"/>
</dbReference>
<dbReference type="PROSITE" id="PS50969">
    <property type="entry name" value="FCP1"/>
    <property type="match status" value="1"/>
</dbReference>
<comment type="function">
    <text evidence="1">Essential component of the TIM23 complex, a complex that mediates the translocation of transit peptide-containing proteins across the mitochondrial inner membrane.</text>
</comment>
<comment type="subunit">
    <text evidence="1">Component of the TIM23 complex at least composed of Tim23, Tim17 (Tim17a1, Tim17a2 or Tim17b1) and a Tim50.</text>
</comment>
<comment type="subcellular location">
    <subcellularLocation>
        <location evidence="1">Mitochondrion inner membrane</location>
        <topology evidence="1">Single-pass membrane protein</topology>
    </subcellularLocation>
</comment>
<comment type="tissue specificity">
    <text evidence="4">Exclusively expressed in the testis.</text>
</comment>
<comment type="similarity">
    <text evidence="5">Belongs to the TIM50 family.</text>
</comment>
<name>TI50A_DROME</name>
<organism>
    <name type="scientific">Drosophila melanogaster</name>
    <name type="common">Fruit fly</name>
    <dbReference type="NCBI Taxonomy" id="7227"/>
    <lineage>
        <taxon>Eukaryota</taxon>
        <taxon>Metazoa</taxon>
        <taxon>Ecdysozoa</taxon>
        <taxon>Arthropoda</taxon>
        <taxon>Hexapoda</taxon>
        <taxon>Insecta</taxon>
        <taxon>Pterygota</taxon>
        <taxon>Neoptera</taxon>
        <taxon>Endopterygota</taxon>
        <taxon>Diptera</taxon>
        <taxon>Brachycera</taxon>
        <taxon>Muscomorpha</taxon>
        <taxon>Ephydroidea</taxon>
        <taxon>Drosophilidae</taxon>
        <taxon>Drosophila</taxon>
        <taxon>Sophophora</taxon>
    </lineage>
</organism>
<sequence>MHKIVWFGTLNKSIGYIGKKKTCLLSPCEKICLNSARKTVQRCDKNYSPPKLRRIKNFYTYSVVLGSLFSIVMWAIYKLGKPEEDHRGPIEDEFSQLPWFRQYIMRMWHTLQYYEKMMEEPQMARLLPNVVPPPYIQPPYSLVLEIKDVLVHPDWTYQTGWRFKKRPGVDYFLQQCSRNFEIVIYTSEQGMTAFPLLDALDPYGYIKYRLVRGATDLVEGQHTKNLDYLNRDLSRVIVVDCDPYTTPLHPDNSLVLTKWLGNDDDVQLFDLTAFLQLIAEHQVNDVREVLRYYRQFEDPMEQFKDNQRRLQEQSQESIQNLPTSERQWNLTLLGRSLRGSSIK</sequence>
<proteinExistence type="evidence at transcript level"/>
<evidence type="ECO:0000250" key="1"/>
<evidence type="ECO:0000255" key="2"/>
<evidence type="ECO:0000255" key="3">
    <source>
        <dbReference type="PROSITE-ProRule" id="PRU00336"/>
    </source>
</evidence>
<evidence type="ECO:0000269" key="4">
    <source>
    </source>
</evidence>
<evidence type="ECO:0000305" key="5"/>
<keyword id="KW-0472">Membrane</keyword>
<keyword id="KW-0496">Mitochondrion</keyword>
<keyword id="KW-0999">Mitochondrion inner membrane</keyword>
<keyword id="KW-0653">Protein transport</keyword>
<keyword id="KW-1185">Reference proteome</keyword>
<keyword id="KW-0809">Transit peptide</keyword>
<keyword id="KW-0811">Translocation</keyword>
<keyword id="KW-0812">Transmembrane</keyword>
<keyword id="KW-1133">Transmembrane helix</keyword>
<keyword id="KW-0813">Transport</keyword>
<protein>
    <recommendedName>
        <fullName>Mitochondrial import inner membrane translocase subunit TIM50-A</fullName>
    </recommendedName>
    <alternativeName>
        <fullName>Tiny tim 3</fullName>
    </alternativeName>
</protein>
<feature type="transit peptide" description="Mitochondrion" evidence="2">
    <location>
        <begin position="1"/>
        <end status="unknown"/>
    </location>
</feature>
<feature type="chain" id="PRO_0000043121" description="Mitochondrial import inner membrane translocase subunit TIM50-A">
    <location>
        <begin status="unknown"/>
        <end position="343"/>
    </location>
</feature>
<feature type="topological domain" description="Mitochondrial matrix" evidence="2">
    <location>
        <begin position="1"/>
        <end position="57"/>
    </location>
</feature>
<feature type="transmembrane region" description="Helical" evidence="2">
    <location>
        <begin position="58"/>
        <end position="77"/>
    </location>
</feature>
<feature type="topological domain" description="Mitochondrial intermembrane" evidence="2">
    <location>
        <begin position="78"/>
        <end position="343"/>
    </location>
</feature>
<feature type="domain" description="FCP1 homology" evidence="3">
    <location>
        <begin position="135"/>
        <end position="278"/>
    </location>
</feature>
<feature type="sequence conflict" description="In Ref. 3; AAY85120." evidence="5" ref="3">
    <original>T</original>
    <variation>S</variation>
    <location>
        <position position="39"/>
    </location>
</feature>
<gene>
    <name type="primary">ttm3</name>
    <name type="ORF">CG6691</name>
</gene>
<accession>Q9V9P3</accession>
<accession>Q4QPP6</accession>